<dbReference type="EC" id="3.2.1.18" evidence="6 7 9 12"/>
<dbReference type="EMBL" id="AJ277883">
    <property type="protein sequence ID" value="CAC81904.1"/>
    <property type="molecule type" value="mRNA"/>
</dbReference>
<dbReference type="EMBL" id="AK289421">
    <property type="protein sequence ID" value="BAF82110.1"/>
    <property type="molecule type" value="mRNA"/>
</dbReference>
<dbReference type="EMBL" id="AY203952">
    <property type="protein sequence ID" value="AAP34475.1"/>
    <property type="status" value="ALT_FRAME"/>
    <property type="molecule type" value="mRNA"/>
</dbReference>
<dbReference type="EMBL" id="AC114730">
    <property type="protein sequence ID" value="AAX82022.1"/>
    <property type="molecule type" value="Genomic_DNA"/>
</dbReference>
<dbReference type="EMBL" id="CH471063">
    <property type="protein sequence ID" value="EAW71296.1"/>
    <property type="molecule type" value="Genomic_DNA"/>
</dbReference>
<dbReference type="EMBL" id="BC012899">
    <property type="protein sequence ID" value="AAH12899.2"/>
    <property type="molecule type" value="mRNA"/>
</dbReference>
<dbReference type="CCDS" id="CCDS2553.1">
    <molecule id="Q8WWR8-2"/>
</dbReference>
<dbReference type="CCDS" id="CCDS54441.1">
    <molecule id="Q8WWR8-3"/>
</dbReference>
<dbReference type="CCDS" id="CCDS54442.1">
    <molecule id="Q8WWR8-1"/>
</dbReference>
<dbReference type="RefSeq" id="NP_001161071.1">
    <molecule id="Q8WWR8-3"/>
    <property type="nucleotide sequence ID" value="NM_001167599.3"/>
</dbReference>
<dbReference type="RefSeq" id="NP_001161072.1">
    <molecule id="Q8WWR8-1"/>
    <property type="nucleotide sequence ID" value="NM_001167600.3"/>
</dbReference>
<dbReference type="RefSeq" id="NP_001161073.1">
    <molecule id="Q8WWR8-1"/>
    <property type="nucleotide sequence ID" value="NM_001167601.3"/>
</dbReference>
<dbReference type="RefSeq" id="NP_001161074.1">
    <molecule id="Q8WWR8-1"/>
    <property type="nucleotide sequence ID" value="NM_001167602.3"/>
</dbReference>
<dbReference type="RefSeq" id="NP_542779.2">
    <molecule id="Q8WWR8-2"/>
    <property type="nucleotide sequence ID" value="NM_080741.3"/>
</dbReference>
<dbReference type="SMR" id="Q8WWR8"/>
<dbReference type="BioGRID" id="126209">
    <property type="interactions" value="64"/>
</dbReference>
<dbReference type="FunCoup" id="Q8WWR8">
    <property type="interactions" value="112"/>
</dbReference>
<dbReference type="IntAct" id="Q8WWR8">
    <property type="interactions" value="27"/>
</dbReference>
<dbReference type="MINT" id="Q8WWR8"/>
<dbReference type="STRING" id="9606.ENSP00000320318"/>
<dbReference type="BindingDB" id="Q8WWR8"/>
<dbReference type="ChEMBL" id="CHEMBL4174"/>
<dbReference type="DrugCentral" id="Q8WWR8"/>
<dbReference type="SwissLipids" id="SLP:000001400">
    <molecule id="Q8WWR8-2"/>
</dbReference>
<dbReference type="SwissLipids" id="SLP:000001401">
    <molecule id="Q8WWR8-1"/>
</dbReference>
<dbReference type="CAZy" id="GH33">
    <property type="family name" value="Glycoside Hydrolase Family 33"/>
</dbReference>
<dbReference type="GlyGen" id="Q8WWR8">
    <property type="glycosylation" value="1 site, 1 O-linked glycan (1 site)"/>
</dbReference>
<dbReference type="iPTMnet" id="Q8WWR8"/>
<dbReference type="PhosphoSitePlus" id="Q8WWR8"/>
<dbReference type="BioMuta" id="NEU4"/>
<dbReference type="DMDM" id="90110434"/>
<dbReference type="MassIVE" id="Q8WWR8"/>
<dbReference type="PaxDb" id="9606-ENSP00000320318"/>
<dbReference type="PeptideAtlas" id="Q8WWR8"/>
<dbReference type="ProteomicsDB" id="74925">
    <molecule id="Q8WWR8-1"/>
</dbReference>
<dbReference type="ProteomicsDB" id="74926">
    <molecule id="Q8WWR8-2"/>
</dbReference>
<dbReference type="Antibodypedia" id="34580">
    <property type="antibodies" value="164 antibodies from 24 providers"/>
</dbReference>
<dbReference type="DNASU" id="129807"/>
<dbReference type="Ensembl" id="ENST00000325935.10">
    <molecule id="Q8WWR8-3"/>
    <property type="protein sequence ID" value="ENSP00000320318.6"/>
    <property type="gene ID" value="ENSG00000204099.12"/>
</dbReference>
<dbReference type="Ensembl" id="ENST00000391969.6">
    <molecule id="Q8WWR8-1"/>
    <property type="protein sequence ID" value="ENSP00000375830.2"/>
    <property type="gene ID" value="ENSG00000204099.12"/>
</dbReference>
<dbReference type="Ensembl" id="ENST00000404257.5">
    <molecule id="Q8WWR8-2"/>
    <property type="protein sequence ID" value="ENSP00000385149.1"/>
    <property type="gene ID" value="ENSG00000204099.12"/>
</dbReference>
<dbReference type="Ensembl" id="ENST00000405370.5">
    <molecule id="Q8WWR8-1"/>
    <property type="protein sequence ID" value="ENSP00000384804.1"/>
    <property type="gene ID" value="ENSG00000204099.12"/>
</dbReference>
<dbReference type="Ensembl" id="ENST00000407683.6">
    <molecule id="Q8WWR8-1"/>
    <property type="protein sequence ID" value="ENSP00000385402.1"/>
    <property type="gene ID" value="ENSG00000204099.12"/>
</dbReference>
<dbReference type="Ensembl" id="ENST00000616490.3">
    <molecule id="Q8WWR8-2"/>
    <property type="protein sequence ID" value="ENSP00000482722.2"/>
    <property type="gene ID" value="ENSG00000277926.4"/>
</dbReference>
<dbReference type="Ensembl" id="ENST00000618866.4">
    <molecule id="Q8WWR8-1"/>
    <property type="protein sequence ID" value="ENSP00000483726.1"/>
    <property type="gene ID" value="ENSG00000277926.4"/>
</dbReference>
<dbReference type="Ensembl" id="ENST00000621851.4">
    <molecule id="Q8WWR8-1"/>
    <property type="protein sequence ID" value="ENSP00000478409.1"/>
    <property type="gene ID" value="ENSG00000277926.4"/>
</dbReference>
<dbReference type="Ensembl" id="ENST00000626600.2">
    <molecule id="Q8WWR8-3"/>
    <property type="protein sequence ID" value="ENSP00000485701.1"/>
    <property type="gene ID" value="ENSG00000277926.4"/>
</dbReference>
<dbReference type="Ensembl" id="ENST00000630923.2">
    <molecule id="Q8WWR8-1"/>
    <property type="protein sequence ID" value="ENSP00000486602.1"/>
    <property type="gene ID" value="ENSG00000277926.4"/>
</dbReference>
<dbReference type="GeneID" id="129807"/>
<dbReference type="KEGG" id="hsa:129807"/>
<dbReference type="MANE-Select" id="ENST00000407683.6">
    <property type="protein sequence ID" value="ENSP00000385402.1"/>
    <property type="RefSeq nucleotide sequence ID" value="NM_001167600.3"/>
    <property type="RefSeq protein sequence ID" value="NP_001161072.1"/>
</dbReference>
<dbReference type="UCSC" id="uc002wcm.4">
    <molecule id="Q8WWR8-1"/>
    <property type="organism name" value="human"/>
</dbReference>
<dbReference type="AGR" id="HGNC:21328"/>
<dbReference type="CTD" id="129807"/>
<dbReference type="DisGeNET" id="129807"/>
<dbReference type="GeneCards" id="NEU4"/>
<dbReference type="HGNC" id="HGNC:21328">
    <property type="gene designation" value="NEU4"/>
</dbReference>
<dbReference type="HPA" id="ENSG00000204099">
    <property type="expression patterns" value="Tissue enriched (liver)"/>
</dbReference>
<dbReference type="MIM" id="608527">
    <property type="type" value="gene"/>
</dbReference>
<dbReference type="neXtProt" id="NX_Q8WWR8"/>
<dbReference type="OpenTargets" id="ENSG00000204099"/>
<dbReference type="PharmGKB" id="PA134917116"/>
<dbReference type="VEuPathDB" id="HostDB:ENSG00000204099"/>
<dbReference type="eggNOG" id="ENOG502QSFT">
    <property type="taxonomic scope" value="Eukaryota"/>
</dbReference>
<dbReference type="GeneTree" id="ENSGT00950000182944"/>
<dbReference type="InParanoid" id="Q8WWR8"/>
<dbReference type="OMA" id="HIDCREC"/>
<dbReference type="OrthoDB" id="2739686at2759"/>
<dbReference type="PAN-GO" id="Q8WWR8">
    <property type="GO annotations" value="6 GO annotations based on evolutionary models"/>
</dbReference>
<dbReference type="PhylomeDB" id="Q8WWR8"/>
<dbReference type="TreeFam" id="TF331063"/>
<dbReference type="BRENDA" id="3.2.1.18">
    <property type="organism ID" value="2681"/>
</dbReference>
<dbReference type="PathwayCommons" id="Q8WWR8"/>
<dbReference type="Reactome" id="R-HSA-4085001">
    <property type="pathway name" value="Sialic acid metabolism"/>
</dbReference>
<dbReference type="Reactome" id="R-HSA-9840310">
    <molecule id="Q8WWR8-2"/>
    <property type="pathway name" value="Glycosphingolipid catabolism"/>
</dbReference>
<dbReference type="SABIO-RK" id="Q8WWR8"/>
<dbReference type="SignaLink" id="Q8WWR8"/>
<dbReference type="BioGRID-ORCS" id="129807">
    <property type="hits" value="12 hits in 1148 CRISPR screens"/>
</dbReference>
<dbReference type="GeneWiki" id="NEU4"/>
<dbReference type="GenomeRNAi" id="129807"/>
<dbReference type="Pharos" id="Q8WWR8">
    <property type="development level" value="Tchem"/>
</dbReference>
<dbReference type="PRO" id="PR:Q8WWR8"/>
<dbReference type="Proteomes" id="UP000005640">
    <property type="component" value="Chromosome 2"/>
</dbReference>
<dbReference type="RNAct" id="Q8WWR8">
    <property type="molecule type" value="protein"/>
</dbReference>
<dbReference type="Bgee" id="ENSG00000204099">
    <property type="expression patterns" value="Expressed in mucosa of transverse colon and 89 other cell types or tissues"/>
</dbReference>
<dbReference type="ExpressionAtlas" id="Q8WWR8">
    <property type="expression patterns" value="baseline and differential"/>
</dbReference>
<dbReference type="GO" id="GO:0005737">
    <property type="term" value="C:cytoplasm"/>
    <property type="evidence" value="ECO:0000318"/>
    <property type="project" value="GO_Central"/>
</dbReference>
<dbReference type="GO" id="GO:0005789">
    <property type="term" value="C:endoplasmic reticulum membrane"/>
    <property type="evidence" value="ECO:0000314"/>
    <property type="project" value="UniProtKB"/>
</dbReference>
<dbReference type="GO" id="GO:0043202">
    <property type="term" value="C:lysosomal lumen"/>
    <property type="evidence" value="ECO:0000304"/>
    <property type="project" value="Reactome"/>
</dbReference>
<dbReference type="GO" id="GO:0005764">
    <property type="term" value="C:lysosome"/>
    <property type="evidence" value="ECO:0000314"/>
    <property type="project" value="UniProtKB"/>
</dbReference>
<dbReference type="GO" id="GO:0016020">
    <property type="term" value="C:membrane"/>
    <property type="evidence" value="ECO:0000318"/>
    <property type="project" value="GO_Central"/>
</dbReference>
<dbReference type="GO" id="GO:0005743">
    <property type="term" value="C:mitochondrial inner membrane"/>
    <property type="evidence" value="ECO:0000314"/>
    <property type="project" value="UniProtKB"/>
</dbReference>
<dbReference type="GO" id="GO:0005741">
    <property type="term" value="C:mitochondrial outer membrane"/>
    <property type="evidence" value="ECO:0000314"/>
    <property type="project" value="UniProtKB"/>
</dbReference>
<dbReference type="GO" id="GO:0043005">
    <property type="term" value="C:neuron projection"/>
    <property type="evidence" value="ECO:0007669"/>
    <property type="project" value="UniProtKB-SubCell"/>
</dbReference>
<dbReference type="GO" id="GO:0019866">
    <property type="term" value="C:organelle inner membrane"/>
    <property type="evidence" value="ECO:0000314"/>
    <property type="project" value="UniProtKB"/>
</dbReference>
<dbReference type="GO" id="GO:0005886">
    <property type="term" value="C:plasma membrane"/>
    <property type="evidence" value="ECO:0007669"/>
    <property type="project" value="UniProtKB-SubCell"/>
</dbReference>
<dbReference type="GO" id="GO:0004308">
    <property type="term" value="F:exo-alpha-sialidase activity"/>
    <property type="evidence" value="ECO:0000314"/>
    <property type="project" value="UniProtKB"/>
</dbReference>
<dbReference type="GO" id="GO:0006689">
    <property type="term" value="P:ganglioside catabolic process"/>
    <property type="evidence" value="ECO:0000314"/>
    <property type="project" value="UniProtKB"/>
</dbReference>
<dbReference type="GO" id="GO:0006516">
    <property type="term" value="P:glycoprotein catabolic process"/>
    <property type="evidence" value="ECO:0000314"/>
    <property type="project" value="UniProtKB"/>
</dbReference>
<dbReference type="GO" id="GO:0010977">
    <property type="term" value="P:negative regulation of neuron projection development"/>
    <property type="evidence" value="ECO:0007669"/>
    <property type="project" value="Ensembl"/>
</dbReference>
<dbReference type="GO" id="GO:0009313">
    <property type="term" value="P:oligosaccharide catabolic process"/>
    <property type="evidence" value="ECO:0000314"/>
    <property type="project" value="UniProtKB"/>
</dbReference>
<dbReference type="CDD" id="cd15482">
    <property type="entry name" value="Sialidase_non-viral"/>
    <property type="match status" value="1"/>
</dbReference>
<dbReference type="FunFam" id="2.120.10.10:FF:000005">
    <property type="entry name" value="Neuraminidase 4"/>
    <property type="match status" value="1"/>
</dbReference>
<dbReference type="FunFam" id="2.120.10.10:FF:000006">
    <property type="entry name" value="Sialidase 4"/>
    <property type="match status" value="1"/>
</dbReference>
<dbReference type="Gene3D" id="2.120.10.10">
    <property type="match status" value="2"/>
</dbReference>
<dbReference type="InterPro" id="IPR011040">
    <property type="entry name" value="Sialidase"/>
</dbReference>
<dbReference type="InterPro" id="IPR026856">
    <property type="entry name" value="Sialidase_fam"/>
</dbReference>
<dbReference type="InterPro" id="IPR036278">
    <property type="entry name" value="Sialidase_sf"/>
</dbReference>
<dbReference type="PANTHER" id="PTHR10628">
    <property type="entry name" value="SIALIDASE"/>
    <property type="match status" value="1"/>
</dbReference>
<dbReference type="PANTHER" id="PTHR10628:SF22">
    <property type="entry name" value="SIALIDASE-4"/>
    <property type="match status" value="1"/>
</dbReference>
<dbReference type="Pfam" id="PF13088">
    <property type="entry name" value="BNR_2"/>
    <property type="match status" value="1"/>
</dbReference>
<dbReference type="SUPFAM" id="SSF50939">
    <property type="entry name" value="Sialidases"/>
    <property type="match status" value="1"/>
</dbReference>
<proteinExistence type="evidence at protein level"/>
<comment type="function">
    <text evidence="2 7 9 12">Exo-alpha-sialidase that catalyzes the hydrolytic cleavage of the terminal sialic acid (N-acetylneuraminic acid, Neu5Ac) of a glycan moiety in the catabolism of glycolipids, glycoproteins and oligosacharides. Efficiently hydrolyzes gangliosides including alpha-(2-&gt;3)-sialylated GD1a and GM3 and alpha-(2-&gt;8)-sialylated GD3 (PubMed:15213228, PubMed:15847605, PubMed:21521691). Hydrolyzes poly-alpha-(2-&gt;8)-sialylated neural cell adhesion molecule NCAM1 likely at growth cones, suppressing neurite outgrowth in hippocampal neurons (By similarity). May desialylate sialyl Lewis A and X antigens at the cell surface, down-regulating these glycan epitopes recognized by SELE/E selectin in the initiation of cell adhesion and extravasation (PubMed:21521691). Has sialidase activity toward mucin, fetuin and sialyllactose (PubMed:15847605).</text>
</comment>
<comment type="catalytic activity">
    <reaction evidence="6 7 9 12">
        <text>Hydrolysis of alpha-(2-&gt;3)-, alpha-(2-&gt;6)-, alpha-(2-&gt;8)- glycosidic linkages of terminal sialic acid residues in oligosaccharides, glycoproteins, glycolipids, colominic acid and synthetic substrates.</text>
        <dbReference type="EC" id="3.2.1.18"/>
    </reaction>
</comment>
<comment type="catalytic activity">
    <reaction evidence="9">
        <text>a ganglioside GM3 + H2O = a beta-D-galactosyl-(1-&gt;4)-beta-D-glucosyl-(1&lt;-&gt;1)-ceramide + N-acetylneuraminate</text>
        <dbReference type="Rhea" id="RHEA:48136"/>
        <dbReference type="ChEBI" id="CHEBI:15377"/>
        <dbReference type="ChEBI" id="CHEBI:35418"/>
        <dbReference type="ChEBI" id="CHEBI:79208"/>
        <dbReference type="ChEBI" id="CHEBI:79210"/>
    </reaction>
    <physiologicalReaction direction="left-to-right" evidence="15">
        <dbReference type="Rhea" id="RHEA:48137"/>
    </physiologicalReaction>
</comment>
<comment type="catalytic activity">
    <reaction evidence="9 12">
        <text>a ganglioside GM3 (d18:1(4E)) + H2O = a beta-D-Gal-(1-&gt;4)-beta-D-Glc-(1&lt;-&gt;1)-Cer(d18:1(4E)) + N-acetylneuraminate</text>
        <dbReference type="Rhea" id="RHEA:47900"/>
        <dbReference type="ChEBI" id="CHEBI:15377"/>
        <dbReference type="ChEBI" id="CHEBI:17950"/>
        <dbReference type="ChEBI" id="CHEBI:35418"/>
        <dbReference type="ChEBI" id="CHEBI:60065"/>
    </reaction>
    <physiologicalReaction direction="left-to-right" evidence="15 16">
        <dbReference type="Rhea" id="RHEA:47901"/>
    </physiologicalReaction>
</comment>
<comment type="catalytic activity">
    <reaction evidence="9">
        <text>a ganglioside GM2 + H2O = a ganglioside GA2 + N-acetylneuraminate</text>
        <dbReference type="Rhea" id="RHEA:48172"/>
        <dbReference type="ChEBI" id="CHEBI:15377"/>
        <dbReference type="ChEBI" id="CHEBI:35418"/>
        <dbReference type="ChEBI" id="CHEBI:79218"/>
        <dbReference type="ChEBI" id="CHEBI:90085"/>
    </reaction>
    <physiologicalReaction direction="left-to-right" evidence="15">
        <dbReference type="Rhea" id="RHEA:48173"/>
    </physiologicalReaction>
</comment>
<comment type="catalytic activity">
    <reaction evidence="9">
        <text>a ganglioside GM2 (d18:1(4E)) + H2O = a ganglioside GA2 (d18:1(4E)) + N-acetylneuraminate</text>
        <dbReference type="Rhea" id="RHEA:48068"/>
        <dbReference type="ChEBI" id="CHEBI:15377"/>
        <dbReference type="ChEBI" id="CHEBI:27731"/>
        <dbReference type="ChEBI" id="CHEBI:35418"/>
        <dbReference type="ChEBI" id="CHEBI:71502"/>
    </reaction>
    <physiologicalReaction direction="left-to-right" evidence="15">
        <dbReference type="Rhea" id="RHEA:48069"/>
    </physiologicalReaction>
</comment>
<comment type="catalytic activity">
    <reaction evidence="9">
        <text>a ganglioside GD1a + H2O = a ganglioside GM1 + N-acetylneuraminate</text>
        <dbReference type="Rhea" id="RHEA:47832"/>
        <dbReference type="ChEBI" id="CHEBI:15377"/>
        <dbReference type="ChEBI" id="CHEBI:35418"/>
        <dbReference type="ChEBI" id="CHEBI:82637"/>
        <dbReference type="ChEBI" id="CHEBI:82639"/>
    </reaction>
    <physiologicalReaction direction="left-to-right" evidence="15">
        <dbReference type="Rhea" id="RHEA:47833"/>
    </physiologicalReaction>
</comment>
<comment type="catalytic activity">
    <reaction evidence="9">
        <text>a ganglioside GD1a (d18:1(4E)) + H2O = a ganglioside GM1 (d18:1(4E)) + N-acetylneuraminate</text>
        <dbReference type="Rhea" id="RHEA:47856"/>
        <dbReference type="ChEBI" id="CHEBI:15377"/>
        <dbReference type="ChEBI" id="CHEBI:35418"/>
        <dbReference type="ChEBI" id="CHEBI:77709"/>
        <dbReference type="ChEBI" id="CHEBI:78445"/>
    </reaction>
    <physiologicalReaction direction="left-to-right" evidence="15">
        <dbReference type="Rhea" id="RHEA:47857"/>
    </physiologicalReaction>
</comment>
<comment type="catalytic activity">
    <reaction evidence="9">
        <text>a ganglioside GD3 + H2O = a ganglioside GM3 + N-acetylneuraminate</text>
        <dbReference type="Rhea" id="RHEA:48120"/>
        <dbReference type="ChEBI" id="CHEBI:15377"/>
        <dbReference type="ChEBI" id="CHEBI:35418"/>
        <dbReference type="ChEBI" id="CHEBI:79210"/>
        <dbReference type="ChEBI" id="CHEBI:79214"/>
    </reaction>
    <physiologicalReaction direction="left-to-right" evidence="15">
        <dbReference type="Rhea" id="RHEA:48121"/>
    </physiologicalReaction>
</comment>
<comment type="catalytic activity">
    <reaction evidence="9">
        <text>a ganglioside GD3 (d18:1(4E)) + H2O = a ganglioside GM3 (d18:1(4E)) + N-acetylneuraminate</text>
        <dbReference type="Rhea" id="RHEA:48124"/>
        <dbReference type="ChEBI" id="CHEBI:15377"/>
        <dbReference type="ChEBI" id="CHEBI:35418"/>
        <dbReference type="ChEBI" id="CHEBI:60065"/>
        <dbReference type="ChEBI" id="CHEBI:78436"/>
    </reaction>
    <physiologicalReaction direction="left-to-right" evidence="15">
        <dbReference type="Rhea" id="RHEA:48125"/>
    </physiologicalReaction>
</comment>
<comment type="biophysicochemical properties">
    <phDependence>
        <text evidence="6">Optimum pH is 3.2.</text>
    </phDependence>
</comment>
<comment type="interaction">
    <interactant intactId="EBI-746964">
        <id>Q8WWR8</id>
    </interactant>
    <interactant intactId="EBI-724076">
        <id>Q99750</id>
        <label>MDFI</label>
    </interactant>
    <organismsDiffer>false</organismsDiffer>
    <experiments>4</experiments>
</comment>
<comment type="interaction">
    <interactant intactId="EBI-746964">
        <id>Q8WWR8</id>
    </interactant>
    <interactant intactId="EBI-740019">
        <id>O15162</id>
        <label>PLSCR1</label>
    </interactant>
    <organismsDiffer>false</organismsDiffer>
    <experiments>2</experiments>
</comment>
<comment type="interaction">
    <interactant intactId="EBI-10277551">
        <id>Q8WWR8-2</id>
    </interactant>
    <interactant intactId="EBI-432924">
        <id>P63010</id>
        <label>AP2B1</label>
    </interactant>
    <organismsDiffer>false</organismsDiffer>
    <experiments>3</experiments>
</comment>
<comment type="interaction">
    <interactant intactId="EBI-10277551">
        <id>Q8WWR8-2</id>
    </interactant>
    <interactant intactId="EBI-11529439">
        <id>P63010-2</id>
        <label>AP2B1</label>
    </interactant>
    <organismsDiffer>false</organismsDiffer>
    <experiments>3</experiments>
</comment>
<comment type="interaction">
    <interactant intactId="EBI-10277551">
        <id>Q8WWR8-2</id>
    </interactant>
    <interactant intactId="EBI-3867333">
        <id>A8MQ03</id>
        <label>CYSRT1</label>
    </interactant>
    <organismsDiffer>false</organismsDiffer>
    <experiments>3</experiments>
</comment>
<comment type="interaction">
    <interactant intactId="EBI-10277551">
        <id>Q8WWR8-2</id>
    </interactant>
    <interactant intactId="EBI-10210845">
        <id>P59990</id>
        <label>KRTAP12-1</label>
    </interactant>
    <organismsDiffer>false</organismsDiffer>
    <experiments>3</experiments>
</comment>
<comment type="interaction">
    <interactant intactId="EBI-10277551">
        <id>Q8WWR8-2</id>
    </interactant>
    <interactant intactId="EBI-11992140">
        <id>Q3LI76</id>
        <label>KRTAP15-1</label>
    </interactant>
    <organismsDiffer>false</organismsDiffer>
    <experiments>3</experiments>
</comment>
<comment type="interaction">
    <interactant intactId="EBI-10277551">
        <id>Q8WWR8-2</id>
    </interactant>
    <interactant intactId="EBI-10241353">
        <id>Q3SYF9</id>
        <label>KRTAP19-7</label>
    </interactant>
    <organismsDiffer>false</organismsDiffer>
    <experiments>3</experiments>
</comment>
<comment type="interaction">
    <interactant intactId="EBI-10277551">
        <id>Q8WWR8-2</id>
    </interactant>
    <interactant intactId="EBI-11962084">
        <id>Q3LI66</id>
        <label>KRTAP6-2</label>
    </interactant>
    <organismsDiffer>false</organismsDiffer>
    <experiments>3</experiments>
</comment>
<comment type="interaction">
    <interactant intactId="EBI-10277551">
        <id>Q8WWR8-2</id>
    </interactant>
    <interactant intactId="EBI-533224">
        <id>P15884</id>
        <label>TCF4</label>
    </interactant>
    <organismsDiffer>false</organismsDiffer>
    <experiments>3</experiments>
</comment>
<comment type="interaction">
    <interactant intactId="EBI-10277551">
        <id>Q8WWR8-2</id>
    </interactant>
    <interactant intactId="EBI-742327">
        <id>Q15654</id>
        <label>TRIP6</label>
    </interactant>
    <organismsDiffer>false</organismsDiffer>
    <experiments>3</experiments>
</comment>
<comment type="subcellular location">
    <molecule>Isoform 1</molecule>
    <subcellularLocation>
        <location evidence="12">Cell membrane</location>
        <topology>Peripheral membrane protein</topology>
    </subcellularLocation>
    <subcellularLocation>
        <location evidence="9">Endoplasmic reticulum membrane</location>
        <topology>Peripheral membrane protein</topology>
    </subcellularLocation>
    <subcellularLocation>
        <location evidence="9">Microsome membrane</location>
        <topology>Peripheral membrane protein</topology>
    </subcellularLocation>
    <subcellularLocation>
        <location evidence="9 11">Mitochondrion membrane</location>
        <topology>Peripheral membrane protein</topology>
    </subcellularLocation>
    <subcellularLocation>
        <location evidence="2">Cell projection</location>
        <location evidence="2">Neuron projection</location>
    </subcellularLocation>
    <text evidence="11 12">Predominantly associates with endoplasmic reticulum membranes. Only a small fraction associates with mitochondrial and plasma membranes.</text>
</comment>
<comment type="subcellular location">
    <molecule>Isoform 2</molecule>
    <subcellularLocation>
        <location evidence="9">Mitochondrion inner membrane</location>
        <topology>Peripheral membrane protein</topology>
    </subcellularLocation>
    <subcellularLocation>
        <location evidence="9 11">Mitochondrion outer membrane</location>
        <topology>Peripheral membrane protein</topology>
    </subcellularLocation>
    <subcellularLocation>
        <location evidence="7">Lysosome lumen</location>
    </subcellularLocation>
    <text>According to PubMed:15213228, isoform 2 is soluble, N-glycosylated and found in the lumen of lysosomes. However, no signal sequence nor N-glycosylation site is predicted from the sequence.</text>
</comment>
<comment type="alternative products">
    <event type="alternative splicing"/>
    <isoform>
        <id>Q8WWR8-1</id>
        <name>1</name>
        <sequence type="displayed"/>
    </isoform>
    <isoform>
        <id>Q8WWR8-2</id>
        <name>2</name>
        <sequence type="described" ref="VSP_037491"/>
    </isoform>
    <isoform>
        <id>Q8WWR8-3</id>
        <name>3</name>
        <sequence type="described" ref="VSP_047123"/>
    </isoform>
</comment>
<comment type="tissue specificity">
    <molecule>Isoform 1</molecule>
    <text evidence="6 9">Predominant form in liver. Also expressed in brain, kidney and colon.</text>
</comment>
<comment type="tissue specificity">
    <molecule>Isoform 2</molecule>
    <text evidence="9">Highly expressed in brain and at lower levels in kidney and liver.</text>
</comment>
<comment type="induction">
    <text evidence="10">Down-regulated during monocyte to macrophage differentiation.</text>
</comment>
<comment type="PTM">
    <molecule>Isoform 2</molecule>
    <text evidence="7">N-glycosylated.</text>
</comment>
<comment type="similarity">
    <text evidence="14">Belongs to the glycosyl hydrolase 33 family.</text>
</comment>
<comment type="sequence caution" evidence="14">
    <conflict type="frameshift">
        <sequence resource="EMBL-CDS" id="AAP34475"/>
    </conflict>
</comment>
<organism>
    <name type="scientific">Homo sapiens</name>
    <name type="common">Human</name>
    <dbReference type="NCBI Taxonomy" id="9606"/>
    <lineage>
        <taxon>Eukaryota</taxon>
        <taxon>Metazoa</taxon>
        <taxon>Chordata</taxon>
        <taxon>Craniata</taxon>
        <taxon>Vertebrata</taxon>
        <taxon>Euteleostomi</taxon>
        <taxon>Mammalia</taxon>
        <taxon>Eutheria</taxon>
        <taxon>Euarchontoglires</taxon>
        <taxon>Primates</taxon>
        <taxon>Haplorrhini</taxon>
        <taxon>Catarrhini</taxon>
        <taxon>Hominidae</taxon>
        <taxon>Homo</taxon>
    </lineage>
</organism>
<protein>
    <recommendedName>
        <fullName>Sialidase-4</fullName>
        <ecNumber evidence="6 7 9 12">3.2.1.18</ecNumber>
    </recommendedName>
    <alternativeName>
        <fullName>N-acetyl-alpha-neuraminidase 4</fullName>
    </alternativeName>
</protein>
<sequence>MGVPRTPSRTVLFERERTGLTYRVPSLLPVPPGPTLLAFVEQRLSPDDSHAHRLVLRRGTLAGGSVRWGALHVLGTAALAEHRSMNPCPVHDAGTGTVFLFFIAVLGHTPEAVQIATGRNAARLCCVASRDAGLSWGSARDLTEEAIGGAVQDWATFAVGPGHGVQLPSGRLLVPAYTYRVDRRECFGKICRTSPHSFAFYSDDHGRTWRCGGLVPNLRSGECQLAAVDGGQAGSFLYCNARSPLGSRVQALSTDEGTSFLPAERVASLPETAWGCQGSIVGFPAPAPNRPRDDSWSVGPGSPLQPPLLGPGVHEPPEEAAVDPRGGQVPGGPFSRLQPRGDGPRQPGPRPGVSGDVGSWTLALPMPFAAPPQSPTWLLYSHPVGRRARLHMGIRLSQSPLDPRSWTEPWVIYEGPSGYSDLASIGPAPEGGLVFACLYESGARTSYDEISFCTFSLREVLENVPASPKPPNLGDKPRGCCWPS</sequence>
<gene>
    <name type="primary">NEU4</name>
    <name type="ORF">LP5125</name>
</gene>
<accession>Q8WWR8</accession>
<accession>A8K056</accession>
<accession>J3KNJ5</accession>
<accession>Q96D64</accession>
<evidence type="ECO:0000250" key="1"/>
<evidence type="ECO:0000250" key="2">
    <source>
        <dbReference type="UniProtKB" id="Q8BZL1"/>
    </source>
</evidence>
<evidence type="ECO:0000255" key="3"/>
<evidence type="ECO:0000256" key="4">
    <source>
        <dbReference type="SAM" id="MobiDB-lite"/>
    </source>
</evidence>
<evidence type="ECO:0000269" key="5">
    <source>
    </source>
</evidence>
<evidence type="ECO:0000269" key="6">
    <source>
    </source>
</evidence>
<evidence type="ECO:0000269" key="7">
    <source>
    </source>
</evidence>
<evidence type="ECO:0000269" key="8">
    <source>
    </source>
</evidence>
<evidence type="ECO:0000269" key="9">
    <source>
    </source>
</evidence>
<evidence type="ECO:0000269" key="10">
    <source>
    </source>
</evidence>
<evidence type="ECO:0000269" key="11">
    <source>
    </source>
</evidence>
<evidence type="ECO:0000269" key="12">
    <source>
    </source>
</evidence>
<evidence type="ECO:0000303" key="13">
    <source>
    </source>
</evidence>
<evidence type="ECO:0000305" key="14"/>
<evidence type="ECO:0000305" key="15">
    <source>
    </source>
</evidence>
<evidence type="ECO:0000305" key="16">
    <source>
    </source>
</evidence>
<feature type="chain" id="PRO_0000208906" description="Sialidase-4">
    <location>
        <begin position="1"/>
        <end position="484"/>
    </location>
</feature>
<feature type="repeat" description="BNR 1">
    <location>
        <begin position="127"/>
        <end position="138"/>
    </location>
</feature>
<feature type="repeat" description="BNR 2">
    <location>
        <begin position="200"/>
        <end position="211"/>
    </location>
</feature>
<feature type="repeat" description="BNR 3">
    <location>
        <begin position="251"/>
        <end position="262"/>
    </location>
</feature>
<feature type="region of interest" description="Disordered" evidence="4">
    <location>
        <begin position="284"/>
        <end position="357"/>
    </location>
</feature>
<feature type="short sequence motif" description="FRIP motif">
    <location>
        <begin position="22"/>
        <end position="25"/>
    </location>
</feature>
<feature type="compositionally biased region" description="Low complexity" evidence="4">
    <location>
        <begin position="336"/>
        <end position="345"/>
    </location>
</feature>
<feature type="active site" description="Proton acceptor" evidence="1">
    <location>
        <position position="47"/>
    </location>
</feature>
<feature type="active site" description="Proton acceptor" evidence="1">
    <location>
        <position position="48"/>
    </location>
</feature>
<feature type="active site" description="Nucleophile" evidence="1">
    <location>
        <position position="419"/>
    </location>
</feature>
<feature type="active site" evidence="3">
    <location>
        <position position="440"/>
    </location>
</feature>
<feature type="binding site" evidence="1">
    <location>
        <position position="23"/>
    </location>
    <ligand>
        <name>substrate</name>
    </ligand>
</feature>
<feature type="binding site" evidence="1">
    <location>
        <position position="43"/>
    </location>
    <ligand>
        <name>substrate</name>
    </ligand>
</feature>
<feature type="binding site" evidence="1">
    <location>
        <position position="177"/>
    </location>
    <ligand>
        <name>substrate</name>
    </ligand>
</feature>
<feature type="binding site" evidence="1">
    <location>
        <position position="179"/>
    </location>
    <ligand>
        <name>substrate</name>
    </ligand>
</feature>
<feature type="binding site" evidence="1">
    <location>
        <position position="222"/>
    </location>
    <ligand>
        <name>substrate</name>
    </ligand>
</feature>
<feature type="binding site" evidence="1">
    <location>
        <position position="242"/>
    </location>
    <ligand>
        <name>substrate</name>
    </ligand>
</feature>
<feature type="binding site" evidence="1">
    <location>
        <position position="389"/>
    </location>
    <ligand>
        <name>substrate</name>
    </ligand>
</feature>
<feature type="splice variant" id="VSP_037491" description="In isoform 2." evidence="13">
    <original>M</original>
    <variation>MMSSAAFPRWLSM</variation>
    <location>
        <position position="1"/>
    </location>
</feature>
<feature type="splice variant" id="VSP_047123" description="In isoform 3." evidence="14">
    <original>M</original>
    <variation>MMSSAAFPRWLQSM</variation>
    <location>
        <position position="1"/>
    </location>
</feature>
<feature type="sequence variant" id="VAR_067458" description="In dbSNP:rs11545301." evidence="5 6 8">
    <original>G</original>
    <variation>R</variation>
    <location>
        <position position="301"/>
    </location>
</feature>
<feature type="mutagenesis site" description="Impairs mitochondrial targeting." evidence="9">
    <original>R</original>
    <variation>A</variation>
    <location>
        <position position="5"/>
    </location>
</feature>
<feature type="sequence conflict" description="In Ref. 1; CAC81904." evidence="14" ref="1">
    <original>R</original>
    <variation>L</variation>
    <location>
        <position position="184"/>
    </location>
</feature>
<keyword id="KW-0025">Alternative splicing</keyword>
<keyword id="KW-0119">Carbohydrate metabolism</keyword>
<keyword id="KW-1003">Cell membrane</keyword>
<keyword id="KW-0966">Cell projection</keyword>
<keyword id="KW-0256">Endoplasmic reticulum</keyword>
<keyword id="KW-0326">Glycosidase</keyword>
<keyword id="KW-0378">Hydrolase</keyword>
<keyword id="KW-0442">Lipid degradation</keyword>
<keyword id="KW-0443">Lipid metabolism</keyword>
<keyword id="KW-0458">Lysosome</keyword>
<keyword id="KW-0472">Membrane</keyword>
<keyword id="KW-0492">Microsome</keyword>
<keyword id="KW-0496">Mitochondrion</keyword>
<keyword id="KW-0999">Mitochondrion inner membrane</keyword>
<keyword id="KW-1000">Mitochondrion outer membrane</keyword>
<keyword id="KW-1267">Proteomics identification</keyword>
<keyword id="KW-1185">Reference proteome</keyword>
<keyword id="KW-0677">Repeat</keyword>
<name>NEUR4_HUMAN</name>
<reference key="1">
    <citation type="journal article" date="2004" name="Genomics">
        <title>Molecular cloning and characterization of NEU4, the fourth member of the human sialidase gene family.</title>
        <authorList>
            <person name="Monti E."/>
            <person name="Bassi M.T."/>
            <person name="Bresciani R."/>
            <person name="Civini S."/>
            <person name="Croci G.L."/>
            <person name="Papini N."/>
            <person name="Riboni M."/>
            <person name="Zanchetti G."/>
            <person name="Ballabio A."/>
            <person name="Preti A."/>
            <person name="Tettamanti G."/>
            <person name="Venerando B."/>
            <person name="Borsani G."/>
        </authorList>
    </citation>
    <scope>NUCLEOTIDE SEQUENCE [MRNA] (ISOFORM 1)</scope>
    <scope>TISSUE SPECIFICITY (ISOFORM 1)</scope>
    <scope>CATALYTIC ACTIVITY</scope>
    <scope>BIOPHYSICOCHEMICAL PROPERTIES</scope>
    <scope>VARIANT ARG-301</scope>
    <source>
        <tissue>Fibroblast</tissue>
    </source>
</reference>
<reference key="2">
    <citation type="journal article" date="2004" name="Nat. Genet.">
        <title>Complete sequencing and characterization of 21,243 full-length human cDNAs.</title>
        <authorList>
            <person name="Ota T."/>
            <person name="Suzuki Y."/>
            <person name="Nishikawa T."/>
            <person name="Otsuki T."/>
            <person name="Sugiyama T."/>
            <person name="Irie R."/>
            <person name="Wakamatsu A."/>
            <person name="Hayashi K."/>
            <person name="Sato H."/>
            <person name="Nagai K."/>
            <person name="Kimura K."/>
            <person name="Makita H."/>
            <person name="Sekine M."/>
            <person name="Obayashi M."/>
            <person name="Nishi T."/>
            <person name="Shibahara T."/>
            <person name="Tanaka T."/>
            <person name="Ishii S."/>
            <person name="Yamamoto J."/>
            <person name="Saito K."/>
            <person name="Kawai Y."/>
            <person name="Isono Y."/>
            <person name="Nakamura Y."/>
            <person name="Nagahari K."/>
            <person name="Murakami K."/>
            <person name="Yasuda T."/>
            <person name="Iwayanagi T."/>
            <person name="Wagatsuma M."/>
            <person name="Shiratori A."/>
            <person name="Sudo H."/>
            <person name="Hosoiri T."/>
            <person name="Kaku Y."/>
            <person name="Kodaira H."/>
            <person name="Kondo H."/>
            <person name="Sugawara M."/>
            <person name="Takahashi M."/>
            <person name="Kanda K."/>
            <person name="Yokoi T."/>
            <person name="Furuya T."/>
            <person name="Kikkawa E."/>
            <person name="Omura Y."/>
            <person name="Abe K."/>
            <person name="Kamihara K."/>
            <person name="Katsuta N."/>
            <person name="Sato K."/>
            <person name="Tanikawa M."/>
            <person name="Yamazaki M."/>
            <person name="Ninomiya K."/>
            <person name="Ishibashi T."/>
            <person name="Yamashita H."/>
            <person name="Murakawa K."/>
            <person name="Fujimori K."/>
            <person name="Tanai H."/>
            <person name="Kimata M."/>
            <person name="Watanabe M."/>
            <person name="Hiraoka S."/>
            <person name="Chiba Y."/>
            <person name="Ishida S."/>
            <person name="Ono Y."/>
            <person name="Takiguchi S."/>
            <person name="Watanabe S."/>
            <person name="Yosida M."/>
            <person name="Hotuta T."/>
            <person name="Kusano J."/>
            <person name="Kanehori K."/>
            <person name="Takahashi-Fujii A."/>
            <person name="Hara H."/>
            <person name="Tanase T.-O."/>
            <person name="Nomura Y."/>
            <person name="Togiya S."/>
            <person name="Komai F."/>
            <person name="Hara R."/>
            <person name="Takeuchi K."/>
            <person name="Arita M."/>
            <person name="Imose N."/>
            <person name="Musashino K."/>
            <person name="Yuuki H."/>
            <person name="Oshima A."/>
            <person name="Sasaki N."/>
            <person name="Aotsuka S."/>
            <person name="Yoshikawa Y."/>
            <person name="Matsunawa H."/>
            <person name="Ichihara T."/>
            <person name="Shiohata N."/>
            <person name="Sano S."/>
            <person name="Moriya S."/>
            <person name="Momiyama H."/>
            <person name="Satoh N."/>
            <person name="Takami S."/>
            <person name="Terashima Y."/>
            <person name="Suzuki O."/>
            <person name="Nakagawa S."/>
            <person name="Senoh A."/>
            <person name="Mizoguchi H."/>
            <person name="Goto Y."/>
            <person name="Shimizu F."/>
            <person name="Wakebe H."/>
            <person name="Hishigaki H."/>
            <person name="Watanabe T."/>
            <person name="Sugiyama A."/>
            <person name="Takemoto M."/>
            <person name="Kawakami B."/>
            <person name="Yamazaki M."/>
            <person name="Watanabe K."/>
            <person name="Kumagai A."/>
            <person name="Itakura S."/>
            <person name="Fukuzumi Y."/>
            <person name="Fujimori Y."/>
            <person name="Komiyama M."/>
            <person name="Tashiro H."/>
            <person name="Tanigami A."/>
            <person name="Fujiwara T."/>
            <person name="Ono T."/>
            <person name="Yamada K."/>
            <person name="Fujii Y."/>
            <person name="Ozaki K."/>
            <person name="Hirao M."/>
            <person name="Ohmori Y."/>
            <person name="Kawabata A."/>
            <person name="Hikiji T."/>
            <person name="Kobatake N."/>
            <person name="Inagaki H."/>
            <person name="Ikema Y."/>
            <person name="Okamoto S."/>
            <person name="Okitani R."/>
            <person name="Kawakami T."/>
            <person name="Noguchi S."/>
            <person name="Itoh T."/>
            <person name="Shigeta K."/>
            <person name="Senba T."/>
            <person name="Matsumura K."/>
            <person name="Nakajima Y."/>
            <person name="Mizuno T."/>
            <person name="Morinaga M."/>
            <person name="Sasaki M."/>
            <person name="Togashi T."/>
            <person name="Oyama M."/>
            <person name="Hata H."/>
            <person name="Watanabe M."/>
            <person name="Komatsu T."/>
            <person name="Mizushima-Sugano J."/>
            <person name="Satoh T."/>
            <person name="Shirai Y."/>
            <person name="Takahashi Y."/>
            <person name="Nakagawa K."/>
            <person name="Okumura K."/>
            <person name="Nagase T."/>
            <person name="Nomura N."/>
            <person name="Kikuchi H."/>
            <person name="Masuho Y."/>
            <person name="Yamashita R."/>
            <person name="Nakai K."/>
            <person name="Yada T."/>
            <person name="Nakamura Y."/>
            <person name="Ohara O."/>
            <person name="Isogai T."/>
            <person name="Sugano S."/>
        </authorList>
    </citation>
    <scope>NUCLEOTIDE SEQUENCE [LARGE SCALE MRNA]</scope>
    <scope>VARIANT ARG-301</scope>
    <source>
        <tissue>Mammary gland</tissue>
    </source>
</reference>
<reference key="3">
    <citation type="journal article" date="2004" name="Proc. Natl. Acad. Sci. U.S.A.">
        <title>Large-scale cDNA transfection screening for genes related to cancer development and progression.</title>
        <authorList>
            <person name="Wan D."/>
            <person name="Gong Y."/>
            <person name="Qin W."/>
            <person name="Zhang P."/>
            <person name="Li J."/>
            <person name="Wei L."/>
            <person name="Zhou X."/>
            <person name="Li H."/>
            <person name="Qiu X."/>
            <person name="Zhong F."/>
            <person name="He L."/>
            <person name="Yu J."/>
            <person name="Yao G."/>
            <person name="Jiang H."/>
            <person name="Qian L."/>
            <person name="Yu Y."/>
            <person name="Shu H."/>
            <person name="Chen X."/>
            <person name="Xu H."/>
            <person name="Guo M."/>
            <person name="Pan Z."/>
            <person name="Chen Y."/>
            <person name="Ge C."/>
            <person name="Yang S."/>
            <person name="Gu J."/>
        </authorList>
    </citation>
    <scope>NUCLEOTIDE SEQUENCE [LARGE SCALE MRNA] (ISOFORM 1)</scope>
    <scope>VARIANT ARG-301</scope>
</reference>
<reference key="4">
    <citation type="journal article" date="2005" name="Nature">
        <title>Generation and annotation of the DNA sequences of human chromosomes 2 and 4.</title>
        <authorList>
            <person name="Hillier L.W."/>
            <person name="Graves T.A."/>
            <person name="Fulton R.S."/>
            <person name="Fulton L.A."/>
            <person name="Pepin K.H."/>
            <person name="Minx P."/>
            <person name="Wagner-McPherson C."/>
            <person name="Layman D."/>
            <person name="Wylie K."/>
            <person name="Sekhon M."/>
            <person name="Becker M.C."/>
            <person name="Fewell G.A."/>
            <person name="Delehaunty K.D."/>
            <person name="Miner T.L."/>
            <person name="Nash W.E."/>
            <person name="Kremitzki C."/>
            <person name="Oddy L."/>
            <person name="Du H."/>
            <person name="Sun H."/>
            <person name="Bradshaw-Cordum H."/>
            <person name="Ali J."/>
            <person name="Carter J."/>
            <person name="Cordes M."/>
            <person name="Harris A."/>
            <person name="Isak A."/>
            <person name="van Brunt A."/>
            <person name="Nguyen C."/>
            <person name="Du F."/>
            <person name="Courtney L."/>
            <person name="Kalicki J."/>
            <person name="Ozersky P."/>
            <person name="Abbott S."/>
            <person name="Armstrong J."/>
            <person name="Belter E.A."/>
            <person name="Caruso L."/>
            <person name="Cedroni M."/>
            <person name="Cotton M."/>
            <person name="Davidson T."/>
            <person name="Desai A."/>
            <person name="Elliott G."/>
            <person name="Erb T."/>
            <person name="Fronick C."/>
            <person name="Gaige T."/>
            <person name="Haakenson W."/>
            <person name="Haglund K."/>
            <person name="Holmes A."/>
            <person name="Harkins R."/>
            <person name="Kim K."/>
            <person name="Kruchowski S.S."/>
            <person name="Strong C.M."/>
            <person name="Grewal N."/>
            <person name="Goyea E."/>
            <person name="Hou S."/>
            <person name="Levy A."/>
            <person name="Martinka S."/>
            <person name="Mead K."/>
            <person name="McLellan M.D."/>
            <person name="Meyer R."/>
            <person name="Randall-Maher J."/>
            <person name="Tomlinson C."/>
            <person name="Dauphin-Kohlberg S."/>
            <person name="Kozlowicz-Reilly A."/>
            <person name="Shah N."/>
            <person name="Swearengen-Shahid S."/>
            <person name="Snider J."/>
            <person name="Strong J.T."/>
            <person name="Thompson J."/>
            <person name="Yoakum M."/>
            <person name="Leonard S."/>
            <person name="Pearman C."/>
            <person name="Trani L."/>
            <person name="Radionenko M."/>
            <person name="Waligorski J.E."/>
            <person name="Wang C."/>
            <person name="Rock S.M."/>
            <person name="Tin-Wollam A.-M."/>
            <person name="Maupin R."/>
            <person name="Latreille P."/>
            <person name="Wendl M.C."/>
            <person name="Yang S.-P."/>
            <person name="Pohl C."/>
            <person name="Wallis J.W."/>
            <person name="Spieth J."/>
            <person name="Bieri T.A."/>
            <person name="Berkowicz N."/>
            <person name="Nelson J.O."/>
            <person name="Osborne J."/>
            <person name="Ding L."/>
            <person name="Meyer R."/>
            <person name="Sabo A."/>
            <person name="Shotland Y."/>
            <person name="Sinha P."/>
            <person name="Wohldmann P.E."/>
            <person name="Cook L.L."/>
            <person name="Hickenbotham M.T."/>
            <person name="Eldred J."/>
            <person name="Williams D."/>
            <person name="Jones T.A."/>
            <person name="She X."/>
            <person name="Ciccarelli F.D."/>
            <person name="Izaurralde E."/>
            <person name="Taylor J."/>
            <person name="Schmutz J."/>
            <person name="Myers R.M."/>
            <person name="Cox D.R."/>
            <person name="Huang X."/>
            <person name="McPherson J.D."/>
            <person name="Mardis E.R."/>
            <person name="Clifton S.W."/>
            <person name="Warren W.C."/>
            <person name="Chinwalla A.T."/>
            <person name="Eddy S.R."/>
            <person name="Marra M.A."/>
            <person name="Ovcharenko I."/>
            <person name="Furey T.S."/>
            <person name="Miller W."/>
            <person name="Eichler E.E."/>
            <person name="Bork P."/>
            <person name="Suyama M."/>
            <person name="Torrents D."/>
            <person name="Waterston R.H."/>
            <person name="Wilson R.K."/>
        </authorList>
    </citation>
    <scope>NUCLEOTIDE SEQUENCE [LARGE SCALE GENOMIC DNA]</scope>
</reference>
<reference key="5">
    <citation type="submission" date="2005-07" db="EMBL/GenBank/DDBJ databases">
        <authorList>
            <person name="Mural R.J."/>
            <person name="Istrail S."/>
            <person name="Sutton G.G."/>
            <person name="Florea L."/>
            <person name="Halpern A.L."/>
            <person name="Mobarry C.M."/>
            <person name="Lippert R."/>
            <person name="Walenz B."/>
            <person name="Shatkay H."/>
            <person name="Dew I."/>
            <person name="Miller J.R."/>
            <person name="Flanigan M.J."/>
            <person name="Edwards N.J."/>
            <person name="Bolanos R."/>
            <person name="Fasulo D."/>
            <person name="Halldorsson B.V."/>
            <person name="Hannenhalli S."/>
            <person name="Turner R."/>
            <person name="Yooseph S."/>
            <person name="Lu F."/>
            <person name="Nusskern D.R."/>
            <person name="Shue B.C."/>
            <person name="Zheng X.H."/>
            <person name="Zhong F."/>
            <person name="Delcher A.L."/>
            <person name="Huson D.H."/>
            <person name="Kravitz S.A."/>
            <person name="Mouchard L."/>
            <person name="Reinert K."/>
            <person name="Remington K.A."/>
            <person name="Clark A.G."/>
            <person name="Waterman M.S."/>
            <person name="Eichler E.E."/>
            <person name="Adams M.D."/>
            <person name="Hunkapiller M.W."/>
            <person name="Myers E.W."/>
            <person name="Venter J.C."/>
        </authorList>
    </citation>
    <scope>NUCLEOTIDE SEQUENCE [LARGE SCALE GENOMIC DNA]</scope>
</reference>
<reference key="6">
    <citation type="journal article" date="2004" name="Genome Res.">
        <title>The status, quality, and expansion of the NIH full-length cDNA project: the Mammalian Gene Collection (MGC).</title>
        <authorList>
            <consortium name="The MGC Project Team"/>
        </authorList>
    </citation>
    <scope>NUCLEOTIDE SEQUENCE [LARGE SCALE MRNA] (ISOFORM 2)</scope>
    <source>
        <tissue>Oligodendroglioma</tissue>
    </source>
</reference>
<reference key="7">
    <citation type="journal article" date="2004" name="J. Biol. Chem.">
        <title>Neu4, a novel human lysosomal lumen sialidase, confers normal phenotype to sialidosis and galactosialidosis cells.</title>
        <authorList>
            <person name="Seyrantepe V."/>
            <person name="Landry K."/>
            <person name="Trudel S."/>
            <person name="Hassan J.A."/>
            <person name="Morales C.R."/>
            <person name="Pshezhetsky A.V."/>
        </authorList>
    </citation>
    <scope>FUNCTION</scope>
    <scope>IDENTIFICATION BY MASS SPECTROMETRY</scope>
    <scope>ALTERNATIVE SPLICING (ISOFORM 2)</scope>
    <scope>CATALYTIC ACTIVITY</scope>
    <scope>SUBCELLULAR LOCATION (ISOFORM 2)</scope>
    <scope>GLYCOSYLATION (ISOFORM 2)</scope>
</reference>
<reference key="8">
    <citation type="journal article" date="2005" name="Biochem. J.">
        <title>Evidence for mitochondrial localization of a novel human sialidase (NEU4).</title>
        <authorList>
            <person name="Yamaguchi K."/>
            <person name="Hata K."/>
            <person name="Koseki K."/>
            <person name="Shiozaki K."/>
            <person name="Akita H."/>
            <person name="Wada T."/>
            <person name="Moriya S."/>
            <person name="Miyagi T."/>
        </authorList>
    </citation>
    <scope>FUNCTION</scope>
    <scope>CATALYTIC ACTIVITY</scope>
    <scope>TISSUE SPECIFICITY (ISOFORMS 1 AND 2)</scope>
    <scope>SUBCELLULAR LOCATION (ISOFORMS 1 AND 2)</scope>
    <scope>MUTAGENESIS OF ARG-5</scope>
</reference>
<reference key="9">
    <citation type="journal article" date="2005" name="FEBS J.">
        <title>Differential expression of endogenous sialidases of human monocytes during cellular differentiation into macrophages.</title>
        <authorList>
            <person name="Stamatos N.M."/>
            <person name="Liang F."/>
            <person name="Nan X."/>
            <person name="Landry K."/>
            <person name="Cross A.S."/>
            <person name="Wang L.X."/>
            <person name="Pshezhetsky A.V."/>
        </authorList>
    </citation>
    <scope>INDUCTION</scope>
</reference>
<reference key="10">
    <citation type="journal article" date="2010" name="Glycobiology">
        <title>Human sialidase NEU4 long and short are extrinsic proteins bound to outer mitochondrial membrane and the endoplasmic reticulum, respectively.</title>
        <authorList>
            <person name="Bigi A."/>
            <person name="Morosi L."/>
            <person name="Pozzi C."/>
            <person name="Forcella M."/>
            <person name="Tettamanti G."/>
            <person name="Venerando B."/>
            <person name="Monti E."/>
            <person name="Fusi P."/>
        </authorList>
    </citation>
    <scope>SUBCELLULAR LOCATION (ISOFORMS 1 AND 2)</scope>
</reference>
<reference key="11">
    <citation type="journal article" date="2011" name="J. Biol. Chem.">
        <title>Regulation of sialyl Lewis antigen expression in colon cancer cells by sialidase NEU4.</title>
        <authorList>
            <person name="Shiozaki K."/>
            <person name="Yamaguchi K."/>
            <person name="Takahashi K."/>
            <person name="Moriya S."/>
            <person name="Miyagi T."/>
        </authorList>
    </citation>
    <scope>FUNCTION</scope>
    <scope>CATALYTIC ACTIVITY</scope>
    <scope>SUBCELLULAR LOCATION (ISOFORM 1)</scope>
</reference>